<name>TRI75_HUMAN</name>
<gene>
    <name evidence="7" type="primary">TRIM75</name>
    <name type="synonym">TRIM75P</name>
</gene>
<proteinExistence type="inferred from homology"/>
<dbReference type="EMBL" id="AC108465">
    <property type="status" value="NOT_ANNOTATED_CDS"/>
    <property type="molecule type" value="Genomic_DNA"/>
</dbReference>
<dbReference type="CCDS" id="CCDS47160.1"/>
<dbReference type="RefSeq" id="NP_001382999.1">
    <property type="nucleotide sequence ID" value="NM_001396070.1"/>
</dbReference>
<dbReference type="SMR" id="A6NK02"/>
<dbReference type="STRING" id="9606.ENSP00000491320"/>
<dbReference type="iPTMnet" id="A6NK02"/>
<dbReference type="PhosphoSitePlus" id="A6NK02"/>
<dbReference type="BioMuta" id="TRIM75P"/>
<dbReference type="jPOST" id="A6NK02"/>
<dbReference type="MassIVE" id="A6NK02"/>
<dbReference type="PeptideAtlas" id="A6NK02"/>
<dbReference type="Antibodypedia" id="82480">
    <property type="antibodies" value="1 antibodies from 1 providers"/>
</dbReference>
<dbReference type="Ensembl" id="ENST00000503032.3">
    <property type="protein sequence ID" value="ENSP00000491320.1"/>
    <property type="gene ID" value="ENSG00000250374.5"/>
</dbReference>
<dbReference type="GeneID" id="391714"/>
<dbReference type="MANE-Select" id="ENST00000503032.3">
    <property type="protein sequence ID" value="ENSP00000491320.1"/>
    <property type="RefSeq nucleotide sequence ID" value="NM_001396070.1"/>
    <property type="RefSeq protein sequence ID" value="NP_001382999.1"/>
</dbReference>
<dbReference type="AGR" id="HGNC:32686"/>
<dbReference type="GeneCards" id="TRIM75"/>
<dbReference type="HGNC" id="HGNC:32686">
    <property type="gene designation" value="TRIM75"/>
</dbReference>
<dbReference type="HPA" id="ENSG00000250374">
    <property type="expression patterns" value="Not detected"/>
</dbReference>
<dbReference type="neXtProt" id="NX_A6NK02"/>
<dbReference type="OpenTargets" id="ENSG00000250374"/>
<dbReference type="VEuPathDB" id="HostDB:ENSG00000250374"/>
<dbReference type="GeneTree" id="ENSGT00940000162839"/>
<dbReference type="InParanoid" id="A6NK02"/>
<dbReference type="OMA" id="CVRFTKR"/>
<dbReference type="OrthoDB" id="128536at2759"/>
<dbReference type="PAN-GO" id="A6NK02">
    <property type="GO annotations" value="5 GO annotations based on evolutionary models"/>
</dbReference>
<dbReference type="PhylomeDB" id="A6NK02"/>
<dbReference type="SIGNOR" id="A6NK02"/>
<dbReference type="Pharos" id="A6NK02">
    <property type="development level" value="Tdark"/>
</dbReference>
<dbReference type="PRO" id="PR:A6NK02"/>
<dbReference type="Proteomes" id="UP000005640">
    <property type="component" value="Chromosome 4"/>
</dbReference>
<dbReference type="RNAct" id="A6NK02">
    <property type="molecule type" value="protein"/>
</dbReference>
<dbReference type="Bgee" id="ENSG00000250374">
    <property type="expression patterns" value="Expressed in male germ line stem cell (sensu Vertebrata) in testis and 2 other cell types or tissues"/>
</dbReference>
<dbReference type="GO" id="GO:0005737">
    <property type="term" value="C:cytoplasm"/>
    <property type="evidence" value="ECO:0000318"/>
    <property type="project" value="GO_Central"/>
</dbReference>
<dbReference type="GO" id="GO:0005615">
    <property type="term" value="C:extracellular space"/>
    <property type="evidence" value="ECO:0007005"/>
    <property type="project" value="UniProtKB"/>
</dbReference>
<dbReference type="GO" id="GO:0005819">
    <property type="term" value="C:spindle"/>
    <property type="evidence" value="ECO:0007669"/>
    <property type="project" value="UniProtKB-SubCell"/>
</dbReference>
<dbReference type="GO" id="GO:0061630">
    <property type="term" value="F:ubiquitin protein ligase activity"/>
    <property type="evidence" value="ECO:0000318"/>
    <property type="project" value="GO_Central"/>
</dbReference>
<dbReference type="GO" id="GO:0008270">
    <property type="term" value="F:zinc ion binding"/>
    <property type="evidence" value="ECO:0007669"/>
    <property type="project" value="UniProtKB-KW"/>
</dbReference>
<dbReference type="GO" id="GO:0007144">
    <property type="term" value="P:female meiosis I"/>
    <property type="evidence" value="ECO:0000250"/>
    <property type="project" value="UniProtKB"/>
</dbReference>
<dbReference type="GO" id="GO:0045087">
    <property type="term" value="P:innate immune response"/>
    <property type="evidence" value="ECO:0000318"/>
    <property type="project" value="GO_Central"/>
</dbReference>
<dbReference type="GO" id="GO:0010468">
    <property type="term" value="P:regulation of gene expression"/>
    <property type="evidence" value="ECO:0000318"/>
    <property type="project" value="GO_Central"/>
</dbReference>
<dbReference type="CDD" id="cd19791">
    <property type="entry name" value="Bbox2_TRIM60-like"/>
    <property type="match status" value="1"/>
</dbReference>
<dbReference type="CDD" id="cd16607">
    <property type="entry name" value="RING-HC_TRIM60-like_C-IV"/>
    <property type="match status" value="1"/>
</dbReference>
<dbReference type="CDD" id="cd15829">
    <property type="entry name" value="SPRY_PRY_TRIM75"/>
    <property type="match status" value="1"/>
</dbReference>
<dbReference type="FunFam" id="3.30.40.10:FF:000171">
    <property type="entry name" value="E3 ubiquitin-protein ligase TRIM39"/>
    <property type="match status" value="1"/>
</dbReference>
<dbReference type="FunFam" id="2.60.120.920:FF:000077">
    <property type="entry name" value="Tripartite motif containing 75, pseudogene"/>
    <property type="match status" value="1"/>
</dbReference>
<dbReference type="Gene3D" id="2.60.120.920">
    <property type="match status" value="1"/>
</dbReference>
<dbReference type="Gene3D" id="3.30.160.60">
    <property type="entry name" value="Classic Zinc Finger"/>
    <property type="match status" value="1"/>
</dbReference>
<dbReference type="Gene3D" id="3.30.40.10">
    <property type="entry name" value="Zinc/RING finger domain, C3HC4 (zinc finger)"/>
    <property type="match status" value="1"/>
</dbReference>
<dbReference type="InterPro" id="IPR001870">
    <property type="entry name" value="B30.2/SPRY"/>
</dbReference>
<dbReference type="InterPro" id="IPR043136">
    <property type="entry name" value="B30.2/SPRY_sf"/>
</dbReference>
<dbReference type="InterPro" id="IPR003879">
    <property type="entry name" value="Butyrophylin_SPRY"/>
</dbReference>
<dbReference type="InterPro" id="IPR013320">
    <property type="entry name" value="ConA-like_dom_sf"/>
</dbReference>
<dbReference type="InterPro" id="IPR006574">
    <property type="entry name" value="PRY"/>
</dbReference>
<dbReference type="InterPro" id="IPR035785">
    <property type="entry name" value="SPRY/PRY_TRIM75"/>
</dbReference>
<dbReference type="InterPro" id="IPR003877">
    <property type="entry name" value="SPRY_dom"/>
</dbReference>
<dbReference type="InterPro" id="IPR050143">
    <property type="entry name" value="TRIM/RBCC"/>
</dbReference>
<dbReference type="InterPro" id="IPR000315">
    <property type="entry name" value="Znf_B-box"/>
</dbReference>
<dbReference type="InterPro" id="IPR001841">
    <property type="entry name" value="Znf_RING"/>
</dbReference>
<dbReference type="InterPro" id="IPR013083">
    <property type="entry name" value="Znf_RING/FYVE/PHD"/>
</dbReference>
<dbReference type="InterPro" id="IPR017907">
    <property type="entry name" value="Znf_RING_CS"/>
</dbReference>
<dbReference type="PANTHER" id="PTHR24103">
    <property type="entry name" value="E3 UBIQUITIN-PROTEIN LIGASE TRIM"/>
    <property type="match status" value="1"/>
</dbReference>
<dbReference type="Pfam" id="PF13765">
    <property type="entry name" value="PRY"/>
    <property type="match status" value="1"/>
</dbReference>
<dbReference type="Pfam" id="PF00622">
    <property type="entry name" value="SPRY"/>
    <property type="match status" value="1"/>
</dbReference>
<dbReference type="Pfam" id="PF00643">
    <property type="entry name" value="zf-B_box"/>
    <property type="match status" value="1"/>
</dbReference>
<dbReference type="Pfam" id="PF15227">
    <property type="entry name" value="zf-C3HC4_4"/>
    <property type="match status" value="1"/>
</dbReference>
<dbReference type="PRINTS" id="PR01407">
    <property type="entry name" value="BUTYPHLNCDUF"/>
</dbReference>
<dbReference type="SMART" id="SM00336">
    <property type="entry name" value="BBOX"/>
    <property type="match status" value="1"/>
</dbReference>
<dbReference type="SMART" id="SM00589">
    <property type="entry name" value="PRY"/>
    <property type="match status" value="1"/>
</dbReference>
<dbReference type="SMART" id="SM00184">
    <property type="entry name" value="RING"/>
    <property type="match status" value="1"/>
</dbReference>
<dbReference type="SMART" id="SM00449">
    <property type="entry name" value="SPRY"/>
    <property type="match status" value="1"/>
</dbReference>
<dbReference type="SUPFAM" id="SSF57845">
    <property type="entry name" value="B-box zinc-binding domain"/>
    <property type="match status" value="1"/>
</dbReference>
<dbReference type="SUPFAM" id="SSF49899">
    <property type="entry name" value="Concanavalin A-like lectins/glucanases"/>
    <property type="match status" value="1"/>
</dbReference>
<dbReference type="SUPFAM" id="SSF57850">
    <property type="entry name" value="RING/U-box"/>
    <property type="match status" value="1"/>
</dbReference>
<dbReference type="PROSITE" id="PS50188">
    <property type="entry name" value="B302_SPRY"/>
    <property type="match status" value="1"/>
</dbReference>
<dbReference type="PROSITE" id="PS50119">
    <property type="entry name" value="ZF_BBOX"/>
    <property type="match status" value="1"/>
</dbReference>
<dbReference type="PROSITE" id="PS00518">
    <property type="entry name" value="ZF_RING_1"/>
    <property type="match status" value="1"/>
</dbReference>
<dbReference type="PROSITE" id="PS50089">
    <property type="entry name" value="ZF_RING_2"/>
    <property type="match status" value="1"/>
</dbReference>
<feature type="chain" id="PRO_0000331192" description="Tripartite motif-containing protein 75">
    <location>
        <begin position="1"/>
        <end position="468"/>
    </location>
</feature>
<feature type="domain" description="B30.2/SPRY" evidence="5">
    <location>
        <begin position="276"/>
        <end position="468"/>
    </location>
</feature>
<feature type="zinc finger region" description="RING-type" evidence="4">
    <location>
        <begin position="16"/>
        <end position="57"/>
    </location>
</feature>
<feature type="zinc finger region" description="B box-type" evidence="3">
    <location>
        <begin position="92"/>
        <end position="133"/>
    </location>
</feature>
<feature type="coiled-coil region" evidence="2">
    <location>
        <begin position="170"/>
        <end position="222"/>
    </location>
</feature>
<feature type="binding site" evidence="3">
    <location>
        <position position="97"/>
    </location>
    <ligand>
        <name>Zn(2+)</name>
        <dbReference type="ChEBI" id="CHEBI:29105"/>
    </ligand>
</feature>
<feature type="binding site" evidence="3">
    <location>
        <position position="100"/>
    </location>
    <ligand>
        <name>Zn(2+)</name>
        <dbReference type="ChEBI" id="CHEBI:29105"/>
    </ligand>
</feature>
<feature type="binding site" evidence="3">
    <location>
        <position position="119"/>
    </location>
    <ligand>
        <name>Zn(2+)</name>
        <dbReference type="ChEBI" id="CHEBI:29105"/>
    </ligand>
</feature>
<feature type="binding site" evidence="3">
    <location>
        <position position="125"/>
    </location>
    <ligand>
        <name>Zn(2+)</name>
        <dbReference type="ChEBI" id="CHEBI:29105"/>
    </ligand>
</feature>
<accession>A6NK02</accession>
<evidence type="ECO:0000250" key="1">
    <source>
        <dbReference type="UniProtKB" id="Q3UWZ0"/>
    </source>
</evidence>
<evidence type="ECO:0000255" key="2"/>
<evidence type="ECO:0000255" key="3">
    <source>
        <dbReference type="PROSITE-ProRule" id="PRU00024"/>
    </source>
</evidence>
<evidence type="ECO:0000255" key="4">
    <source>
        <dbReference type="PROSITE-ProRule" id="PRU00175"/>
    </source>
</evidence>
<evidence type="ECO:0000255" key="5">
    <source>
        <dbReference type="PROSITE-ProRule" id="PRU00548"/>
    </source>
</evidence>
<evidence type="ECO:0000305" key="6"/>
<evidence type="ECO:0000312" key="7">
    <source>
        <dbReference type="HGNC" id="HGNC:32686"/>
    </source>
</evidence>
<comment type="function">
    <text evidence="1">May play a role in female meiosis.</text>
</comment>
<comment type="subcellular location">
    <subcellularLocation>
        <location evidence="1">Cytoplasm</location>
        <location evidence="1">Cytoskeleton</location>
        <location evidence="1">Spindle</location>
    </subcellularLocation>
</comment>
<comment type="similarity">
    <text evidence="6">Belongs to the TRIM/RBCC family.</text>
</comment>
<sequence>MAVAAALTGLQAEAKCSICLDYLSDPVTIECGHNFCRSCIQQSWLDLQELFPCPVCRHQCQEGHFRSNTQLGRMIEIAKLLQSTKSNKRKQEETTLCEKHNQPLSVFCKEDLMVLCPLCTQPPDHQGHHVRPIEKAAIHYRKRFCSYIQPLKKQLADLQKLISTQSKKPLELREMVENQRQELSSEFEHLNQFLDREQQAVLSRLAEEEKDNQQKLSANITAFSNYSATLKSQLSKVVELSELSELELLSQIKIFYESENESSPSIFSIHLKRDGCSFPPQYSALQRIIKKFKVEIILDPETAHPNLIVSEDKKRVRFTKRKQKVPGFPKRFTVKPVVLGFPYFHSGRHFWEIEVGDKSEWAIGICKDSLPTKARRPSSAQQECWRIELQDDGYHAPGAFPTPLLLEVKARAIGIFLDYEMGEISFYNMAEKSHICTFTDTFTGPLRPYFYVGPDSQPLRICTGTVCE</sequence>
<protein>
    <recommendedName>
        <fullName evidence="6">Tripartite motif-containing protein 75</fullName>
    </recommendedName>
</protein>
<reference key="1">
    <citation type="journal article" date="2005" name="Nature">
        <title>Generation and annotation of the DNA sequences of human chromosomes 2 and 4.</title>
        <authorList>
            <person name="Hillier L.W."/>
            <person name="Graves T.A."/>
            <person name="Fulton R.S."/>
            <person name="Fulton L.A."/>
            <person name="Pepin K.H."/>
            <person name="Minx P."/>
            <person name="Wagner-McPherson C."/>
            <person name="Layman D."/>
            <person name="Wylie K."/>
            <person name="Sekhon M."/>
            <person name="Becker M.C."/>
            <person name="Fewell G.A."/>
            <person name="Delehaunty K.D."/>
            <person name="Miner T.L."/>
            <person name="Nash W.E."/>
            <person name="Kremitzki C."/>
            <person name="Oddy L."/>
            <person name="Du H."/>
            <person name="Sun H."/>
            <person name="Bradshaw-Cordum H."/>
            <person name="Ali J."/>
            <person name="Carter J."/>
            <person name="Cordes M."/>
            <person name="Harris A."/>
            <person name="Isak A."/>
            <person name="van Brunt A."/>
            <person name="Nguyen C."/>
            <person name="Du F."/>
            <person name="Courtney L."/>
            <person name="Kalicki J."/>
            <person name="Ozersky P."/>
            <person name="Abbott S."/>
            <person name="Armstrong J."/>
            <person name="Belter E.A."/>
            <person name="Caruso L."/>
            <person name="Cedroni M."/>
            <person name="Cotton M."/>
            <person name="Davidson T."/>
            <person name="Desai A."/>
            <person name="Elliott G."/>
            <person name="Erb T."/>
            <person name="Fronick C."/>
            <person name="Gaige T."/>
            <person name="Haakenson W."/>
            <person name="Haglund K."/>
            <person name="Holmes A."/>
            <person name="Harkins R."/>
            <person name="Kim K."/>
            <person name="Kruchowski S.S."/>
            <person name="Strong C.M."/>
            <person name="Grewal N."/>
            <person name="Goyea E."/>
            <person name="Hou S."/>
            <person name="Levy A."/>
            <person name="Martinka S."/>
            <person name="Mead K."/>
            <person name="McLellan M.D."/>
            <person name="Meyer R."/>
            <person name="Randall-Maher J."/>
            <person name="Tomlinson C."/>
            <person name="Dauphin-Kohlberg S."/>
            <person name="Kozlowicz-Reilly A."/>
            <person name="Shah N."/>
            <person name="Swearengen-Shahid S."/>
            <person name="Snider J."/>
            <person name="Strong J.T."/>
            <person name="Thompson J."/>
            <person name="Yoakum M."/>
            <person name="Leonard S."/>
            <person name="Pearman C."/>
            <person name="Trani L."/>
            <person name="Radionenko M."/>
            <person name="Waligorski J.E."/>
            <person name="Wang C."/>
            <person name="Rock S.M."/>
            <person name="Tin-Wollam A.-M."/>
            <person name="Maupin R."/>
            <person name="Latreille P."/>
            <person name="Wendl M.C."/>
            <person name="Yang S.-P."/>
            <person name="Pohl C."/>
            <person name="Wallis J.W."/>
            <person name="Spieth J."/>
            <person name="Bieri T.A."/>
            <person name="Berkowicz N."/>
            <person name="Nelson J.O."/>
            <person name="Osborne J."/>
            <person name="Ding L."/>
            <person name="Meyer R."/>
            <person name="Sabo A."/>
            <person name="Shotland Y."/>
            <person name="Sinha P."/>
            <person name="Wohldmann P.E."/>
            <person name="Cook L.L."/>
            <person name="Hickenbotham M.T."/>
            <person name="Eldred J."/>
            <person name="Williams D."/>
            <person name="Jones T.A."/>
            <person name="She X."/>
            <person name="Ciccarelli F.D."/>
            <person name="Izaurralde E."/>
            <person name="Taylor J."/>
            <person name="Schmutz J."/>
            <person name="Myers R.M."/>
            <person name="Cox D.R."/>
            <person name="Huang X."/>
            <person name="McPherson J.D."/>
            <person name="Mardis E.R."/>
            <person name="Clifton S.W."/>
            <person name="Warren W.C."/>
            <person name="Chinwalla A.T."/>
            <person name="Eddy S.R."/>
            <person name="Marra M.A."/>
            <person name="Ovcharenko I."/>
            <person name="Furey T.S."/>
            <person name="Miller W."/>
            <person name="Eichler E.E."/>
            <person name="Bork P."/>
            <person name="Suyama M."/>
            <person name="Torrents D."/>
            <person name="Waterston R.H."/>
            <person name="Wilson R.K."/>
        </authorList>
    </citation>
    <scope>NUCLEOTIDE SEQUENCE [LARGE SCALE GENOMIC DNA]</scope>
</reference>
<organism>
    <name type="scientific">Homo sapiens</name>
    <name type="common">Human</name>
    <dbReference type="NCBI Taxonomy" id="9606"/>
    <lineage>
        <taxon>Eukaryota</taxon>
        <taxon>Metazoa</taxon>
        <taxon>Chordata</taxon>
        <taxon>Craniata</taxon>
        <taxon>Vertebrata</taxon>
        <taxon>Euteleostomi</taxon>
        <taxon>Mammalia</taxon>
        <taxon>Eutheria</taxon>
        <taxon>Euarchontoglires</taxon>
        <taxon>Primates</taxon>
        <taxon>Haplorrhini</taxon>
        <taxon>Catarrhini</taxon>
        <taxon>Hominidae</taxon>
        <taxon>Homo</taxon>
    </lineage>
</organism>
<keyword id="KW-0175">Coiled coil</keyword>
<keyword id="KW-0963">Cytoplasm</keyword>
<keyword id="KW-0206">Cytoskeleton</keyword>
<keyword id="KW-0479">Metal-binding</keyword>
<keyword id="KW-1185">Reference proteome</keyword>
<keyword id="KW-0862">Zinc</keyword>
<keyword id="KW-0863">Zinc-finger</keyword>